<gene>
    <name evidence="2" type="primary">tuf1</name>
    <name type="ordered locus">EcE24377A_3808</name>
</gene>
<protein>
    <recommendedName>
        <fullName evidence="2">Elongation factor Tu 1</fullName>
        <shortName evidence="2">EF-Tu 1</shortName>
        <ecNumber evidence="2">3.6.5.3</ecNumber>
    </recommendedName>
</protein>
<feature type="chain" id="PRO_0000337386" description="Elongation factor Tu 1">
    <location>
        <begin position="1"/>
        <end position="394"/>
    </location>
</feature>
<feature type="domain" description="tr-type G">
    <location>
        <begin position="10"/>
        <end position="204"/>
    </location>
</feature>
<feature type="region of interest" description="G1" evidence="1">
    <location>
        <begin position="19"/>
        <end position="26"/>
    </location>
</feature>
<feature type="region of interest" description="G2" evidence="1">
    <location>
        <begin position="60"/>
        <end position="64"/>
    </location>
</feature>
<feature type="region of interest" description="G3" evidence="1">
    <location>
        <begin position="81"/>
        <end position="84"/>
    </location>
</feature>
<feature type="region of interest" description="G4" evidence="1">
    <location>
        <begin position="136"/>
        <end position="139"/>
    </location>
</feature>
<feature type="region of interest" description="G5" evidence="1">
    <location>
        <begin position="174"/>
        <end position="176"/>
    </location>
</feature>
<feature type="binding site" evidence="2">
    <location>
        <begin position="19"/>
        <end position="26"/>
    </location>
    <ligand>
        <name>GTP</name>
        <dbReference type="ChEBI" id="CHEBI:37565"/>
    </ligand>
</feature>
<feature type="binding site" evidence="2">
    <location>
        <position position="26"/>
    </location>
    <ligand>
        <name>Mg(2+)</name>
        <dbReference type="ChEBI" id="CHEBI:18420"/>
    </ligand>
</feature>
<feature type="binding site" evidence="2">
    <location>
        <begin position="81"/>
        <end position="85"/>
    </location>
    <ligand>
        <name>GTP</name>
        <dbReference type="ChEBI" id="CHEBI:37565"/>
    </ligand>
</feature>
<feature type="binding site" evidence="2">
    <location>
        <begin position="136"/>
        <end position="139"/>
    </location>
    <ligand>
        <name>GTP</name>
        <dbReference type="ChEBI" id="CHEBI:37565"/>
    </ligand>
</feature>
<sequence>MSKEKFERTKPHVNVGTIGHVDHGKTTLTAAITTVLAKTYGGAARAFDQIDNAPEEKARGITINTSHVEYDTPTRHYAHVDCPGHADYVKNMITGAAQMDGAILVVAATDGPMPQTREHILLGRQVGVPYIIVFLNKCDMVDDEELLELVEMEVRELLSQYDFPGDDTPIVRGSALKALEGDAEWEAKILELAGFLDSYIPEPERAIDKPFLLPIEDVFSISGRGTVVTGRVERGIIKVGEEVEIVGIKETQKSTCTGVEMFRKLLDEGRAGENVGVLLRGIKREEIERGQVLAKPGTIKPHTKFESEVYILSKDEGGRHTPFFKGYRPQFYFRTTDVTGTIELPEGVEMVMPGDNIKMVVTLIHPIAMDDGLRFAIREGGRTVGAGVVAKVLG</sequence>
<organism>
    <name type="scientific">Escherichia coli O139:H28 (strain E24377A / ETEC)</name>
    <dbReference type="NCBI Taxonomy" id="331111"/>
    <lineage>
        <taxon>Bacteria</taxon>
        <taxon>Pseudomonadati</taxon>
        <taxon>Pseudomonadota</taxon>
        <taxon>Gammaproteobacteria</taxon>
        <taxon>Enterobacterales</taxon>
        <taxon>Enterobacteriaceae</taxon>
        <taxon>Escherichia</taxon>
    </lineage>
</organism>
<proteinExistence type="inferred from homology"/>
<comment type="function">
    <text evidence="2">GTP hydrolase that promotes the GTP-dependent binding of aminoacyl-tRNA to the A-site of ribosomes during protein biosynthesis.</text>
</comment>
<comment type="catalytic activity">
    <reaction evidence="2">
        <text>GTP + H2O = GDP + phosphate + H(+)</text>
        <dbReference type="Rhea" id="RHEA:19669"/>
        <dbReference type="ChEBI" id="CHEBI:15377"/>
        <dbReference type="ChEBI" id="CHEBI:15378"/>
        <dbReference type="ChEBI" id="CHEBI:37565"/>
        <dbReference type="ChEBI" id="CHEBI:43474"/>
        <dbReference type="ChEBI" id="CHEBI:58189"/>
        <dbReference type="EC" id="3.6.5.3"/>
    </reaction>
    <physiologicalReaction direction="left-to-right" evidence="2">
        <dbReference type="Rhea" id="RHEA:19670"/>
    </physiologicalReaction>
</comment>
<comment type="subunit">
    <text evidence="2">Monomer.</text>
</comment>
<comment type="subcellular location">
    <subcellularLocation>
        <location evidence="2">Cytoplasm</location>
    </subcellularLocation>
</comment>
<comment type="similarity">
    <text evidence="2">Belongs to the TRAFAC class translation factor GTPase superfamily. Classic translation factor GTPase family. EF-Tu/EF-1A subfamily.</text>
</comment>
<name>EFTU1_ECO24</name>
<dbReference type="EC" id="3.6.5.3" evidence="2"/>
<dbReference type="EMBL" id="CP000800">
    <property type="protein sequence ID" value="ABV16458.1"/>
    <property type="molecule type" value="Genomic_DNA"/>
</dbReference>
<dbReference type="BMRB" id="A7ZSL4"/>
<dbReference type="SMR" id="A7ZSL4"/>
<dbReference type="KEGG" id="ecw:EcE24377A_3808"/>
<dbReference type="HOGENOM" id="CLU_007265_0_2_6"/>
<dbReference type="Proteomes" id="UP000001122">
    <property type="component" value="Chromosome"/>
</dbReference>
<dbReference type="GO" id="GO:0005829">
    <property type="term" value="C:cytosol"/>
    <property type="evidence" value="ECO:0007669"/>
    <property type="project" value="TreeGrafter"/>
</dbReference>
<dbReference type="GO" id="GO:0005525">
    <property type="term" value="F:GTP binding"/>
    <property type="evidence" value="ECO:0007669"/>
    <property type="project" value="UniProtKB-UniRule"/>
</dbReference>
<dbReference type="GO" id="GO:0003924">
    <property type="term" value="F:GTPase activity"/>
    <property type="evidence" value="ECO:0007669"/>
    <property type="project" value="InterPro"/>
</dbReference>
<dbReference type="GO" id="GO:0097216">
    <property type="term" value="F:guanosine tetraphosphate binding"/>
    <property type="evidence" value="ECO:0007669"/>
    <property type="project" value="UniProtKB-ARBA"/>
</dbReference>
<dbReference type="GO" id="GO:0003746">
    <property type="term" value="F:translation elongation factor activity"/>
    <property type="evidence" value="ECO:0007669"/>
    <property type="project" value="UniProtKB-UniRule"/>
</dbReference>
<dbReference type="CDD" id="cd01884">
    <property type="entry name" value="EF_Tu"/>
    <property type="match status" value="1"/>
</dbReference>
<dbReference type="CDD" id="cd03697">
    <property type="entry name" value="EFTU_II"/>
    <property type="match status" value="1"/>
</dbReference>
<dbReference type="CDD" id="cd03707">
    <property type="entry name" value="EFTU_III"/>
    <property type="match status" value="1"/>
</dbReference>
<dbReference type="FunFam" id="2.40.30.10:FF:000001">
    <property type="entry name" value="Elongation factor Tu"/>
    <property type="match status" value="1"/>
</dbReference>
<dbReference type="FunFam" id="3.40.50.300:FF:000003">
    <property type="entry name" value="Elongation factor Tu"/>
    <property type="match status" value="1"/>
</dbReference>
<dbReference type="Gene3D" id="3.40.50.300">
    <property type="entry name" value="P-loop containing nucleotide triphosphate hydrolases"/>
    <property type="match status" value="1"/>
</dbReference>
<dbReference type="Gene3D" id="2.40.30.10">
    <property type="entry name" value="Translation factors"/>
    <property type="match status" value="2"/>
</dbReference>
<dbReference type="HAMAP" id="MF_00118_B">
    <property type="entry name" value="EF_Tu_B"/>
    <property type="match status" value="1"/>
</dbReference>
<dbReference type="InterPro" id="IPR041709">
    <property type="entry name" value="EF-Tu_GTP-bd"/>
</dbReference>
<dbReference type="InterPro" id="IPR050055">
    <property type="entry name" value="EF-Tu_GTPase"/>
</dbReference>
<dbReference type="InterPro" id="IPR004161">
    <property type="entry name" value="EFTu-like_2"/>
</dbReference>
<dbReference type="InterPro" id="IPR033720">
    <property type="entry name" value="EFTU_2"/>
</dbReference>
<dbReference type="InterPro" id="IPR031157">
    <property type="entry name" value="G_TR_CS"/>
</dbReference>
<dbReference type="InterPro" id="IPR027417">
    <property type="entry name" value="P-loop_NTPase"/>
</dbReference>
<dbReference type="InterPro" id="IPR005225">
    <property type="entry name" value="Small_GTP-bd"/>
</dbReference>
<dbReference type="InterPro" id="IPR000795">
    <property type="entry name" value="T_Tr_GTP-bd_dom"/>
</dbReference>
<dbReference type="InterPro" id="IPR009000">
    <property type="entry name" value="Transl_B-barrel_sf"/>
</dbReference>
<dbReference type="InterPro" id="IPR009001">
    <property type="entry name" value="Transl_elong_EF1A/Init_IF2_C"/>
</dbReference>
<dbReference type="InterPro" id="IPR004541">
    <property type="entry name" value="Transl_elong_EFTu/EF1A_bac/org"/>
</dbReference>
<dbReference type="InterPro" id="IPR004160">
    <property type="entry name" value="Transl_elong_EFTu/EF1A_C"/>
</dbReference>
<dbReference type="NCBIfam" id="TIGR00485">
    <property type="entry name" value="EF-Tu"/>
    <property type="match status" value="1"/>
</dbReference>
<dbReference type="NCBIfam" id="NF000766">
    <property type="entry name" value="PRK00049.1"/>
    <property type="match status" value="1"/>
</dbReference>
<dbReference type="NCBIfam" id="NF009372">
    <property type="entry name" value="PRK12735.1"/>
    <property type="match status" value="1"/>
</dbReference>
<dbReference type="NCBIfam" id="NF009373">
    <property type="entry name" value="PRK12736.1"/>
    <property type="match status" value="1"/>
</dbReference>
<dbReference type="NCBIfam" id="TIGR00231">
    <property type="entry name" value="small_GTP"/>
    <property type="match status" value="1"/>
</dbReference>
<dbReference type="PANTHER" id="PTHR43721:SF22">
    <property type="entry name" value="ELONGATION FACTOR TU, MITOCHONDRIAL"/>
    <property type="match status" value="1"/>
</dbReference>
<dbReference type="PANTHER" id="PTHR43721">
    <property type="entry name" value="ELONGATION FACTOR TU-RELATED"/>
    <property type="match status" value="1"/>
</dbReference>
<dbReference type="Pfam" id="PF00009">
    <property type="entry name" value="GTP_EFTU"/>
    <property type="match status" value="1"/>
</dbReference>
<dbReference type="Pfam" id="PF03144">
    <property type="entry name" value="GTP_EFTU_D2"/>
    <property type="match status" value="1"/>
</dbReference>
<dbReference type="Pfam" id="PF03143">
    <property type="entry name" value="GTP_EFTU_D3"/>
    <property type="match status" value="1"/>
</dbReference>
<dbReference type="PRINTS" id="PR00315">
    <property type="entry name" value="ELONGATNFCT"/>
</dbReference>
<dbReference type="SUPFAM" id="SSF50465">
    <property type="entry name" value="EF-Tu/eEF-1alpha/eIF2-gamma C-terminal domain"/>
    <property type="match status" value="1"/>
</dbReference>
<dbReference type="SUPFAM" id="SSF52540">
    <property type="entry name" value="P-loop containing nucleoside triphosphate hydrolases"/>
    <property type="match status" value="1"/>
</dbReference>
<dbReference type="SUPFAM" id="SSF50447">
    <property type="entry name" value="Translation proteins"/>
    <property type="match status" value="1"/>
</dbReference>
<dbReference type="PROSITE" id="PS00301">
    <property type="entry name" value="G_TR_1"/>
    <property type="match status" value="1"/>
</dbReference>
<dbReference type="PROSITE" id="PS51722">
    <property type="entry name" value="G_TR_2"/>
    <property type="match status" value="1"/>
</dbReference>
<keyword id="KW-0963">Cytoplasm</keyword>
<keyword id="KW-0251">Elongation factor</keyword>
<keyword id="KW-0342">GTP-binding</keyword>
<keyword id="KW-0378">Hydrolase</keyword>
<keyword id="KW-0460">Magnesium</keyword>
<keyword id="KW-0479">Metal-binding</keyword>
<keyword id="KW-0547">Nucleotide-binding</keyword>
<keyword id="KW-0648">Protein biosynthesis</keyword>
<keyword id="KW-1185">Reference proteome</keyword>
<reference key="1">
    <citation type="journal article" date="2008" name="J. Bacteriol.">
        <title>The pangenome structure of Escherichia coli: comparative genomic analysis of E. coli commensal and pathogenic isolates.</title>
        <authorList>
            <person name="Rasko D.A."/>
            <person name="Rosovitz M.J."/>
            <person name="Myers G.S.A."/>
            <person name="Mongodin E.F."/>
            <person name="Fricke W.F."/>
            <person name="Gajer P."/>
            <person name="Crabtree J."/>
            <person name="Sebaihia M."/>
            <person name="Thomson N.R."/>
            <person name="Chaudhuri R."/>
            <person name="Henderson I.R."/>
            <person name="Sperandio V."/>
            <person name="Ravel J."/>
        </authorList>
    </citation>
    <scope>NUCLEOTIDE SEQUENCE [LARGE SCALE GENOMIC DNA]</scope>
    <source>
        <strain>E24377A / ETEC</strain>
    </source>
</reference>
<evidence type="ECO:0000250" key="1"/>
<evidence type="ECO:0000255" key="2">
    <source>
        <dbReference type="HAMAP-Rule" id="MF_00118"/>
    </source>
</evidence>
<accession>A7ZSL4</accession>